<feature type="chain" id="PRO_1000215101" description="Protein translocase subunit SecA">
    <location>
        <begin position="1"/>
        <end position="995"/>
    </location>
</feature>
<feature type="region of interest" description="Disordered" evidence="2">
    <location>
        <begin position="883"/>
        <end position="911"/>
    </location>
</feature>
<feature type="region of interest" description="Disordered" evidence="2">
    <location>
        <begin position="939"/>
        <end position="995"/>
    </location>
</feature>
<feature type="compositionally biased region" description="Low complexity" evidence="2">
    <location>
        <begin position="957"/>
        <end position="969"/>
    </location>
</feature>
<feature type="binding site" evidence="1">
    <location>
        <position position="86"/>
    </location>
    <ligand>
        <name>ATP</name>
        <dbReference type="ChEBI" id="CHEBI:30616"/>
    </ligand>
</feature>
<feature type="binding site" evidence="1">
    <location>
        <begin position="104"/>
        <end position="108"/>
    </location>
    <ligand>
        <name>ATP</name>
        <dbReference type="ChEBI" id="CHEBI:30616"/>
    </ligand>
</feature>
<feature type="binding site" evidence="1">
    <location>
        <position position="535"/>
    </location>
    <ligand>
        <name>ATP</name>
        <dbReference type="ChEBI" id="CHEBI:30616"/>
    </ligand>
</feature>
<feature type="binding site" evidence="1">
    <location>
        <position position="912"/>
    </location>
    <ligand>
        <name>Zn(2+)</name>
        <dbReference type="ChEBI" id="CHEBI:29105"/>
    </ligand>
</feature>
<feature type="binding site" evidence="1">
    <location>
        <position position="914"/>
    </location>
    <ligand>
        <name>Zn(2+)</name>
        <dbReference type="ChEBI" id="CHEBI:29105"/>
    </ligand>
</feature>
<feature type="binding site" evidence="1">
    <location>
        <position position="923"/>
    </location>
    <ligand>
        <name>Zn(2+)</name>
        <dbReference type="ChEBI" id="CHEBI:29105"/>
    </ligand>
</feature>
<feature type="binding site" evidence="1">
    <location>
        <position position="924"/>
    </location>
    <ligand>
        <name>Zn(2+)</name>
        <dbReference type="ChEBI" id="CHEBI:29105"/>
    </ligand>
</feature>
<protein>
    <recommendedName>
        <fullName evidence="1">Protein translocase subunit SecA</fullName>
        <ecNumber evidence="1">7.4.2.8</ecNumber>
    </recommendedName>
</protein>
<sequence length="995" mass="112940">MMNFLRRLLGDSNEKELRRLQPIVEEINRLGPEFAALSDAELRAKTDEFRQRLADGETLDDILPEAFATVREAAHRTIGLRHYDVQLIGGIVLHQGKIAEMKTGEGKTLVATLPLYLNALEGKGVHLVTVNDYLAKVGAGWMGPIYHFLGLTVGFIAHDQSALYDPDFIDPDANPEDQRLVHWRPCTRREAYLADITYGTNNEFGFDYLRDNMAYEKSQLVQRELHYAIVDEVDNILIDEARTPLIISGPAQKSSDLYRQMAQLVRQLRRSSVTAKQVKEEGLEPDGDFFVDERTKSIYLSEKGIEKLERLLRIPPGESLFDPEHYEKTHYIENALKAQFIYQRDRDYMVTPNGEVVIIDEFTGRAMPGRRWSDGLHQAVEAKEGVAIKNENVTLATITFQNYFRMYKKLAGMTGTAYTEREEFAKIYNLEVVVIPTHKPMIREDLPDQIYATEEAKFNAVLREVQEMHEIGRPVLIGTTSVETSERISAMLKRAGIPHNVLNAKHHEREAAIIAQAGRKGAVTVATNMAGRGTDILLGGNPDGLLEEFLRKEGLTIETATPEQKRAAWEKARAQTEAEGEEVRRLGGLHVIGTERHEARRIDNQLRGRAGRQGDPGSSRFFLSLEDELLRRFGPVDRIKGLMERFVDSDVPLQAGLLDRTIEGAQTRVEGYNFDVRKHTVEFDDVMNKQRQIIYADRKAILDEADMRERVLDLMAEEIQRQIDEHLIDGFEEEDLTNLLRAYRRINSTLPASVTAETLKGKTKEEIEQYLLDHLETTYAERERAVTPELMRTIERRVMLGAIDRQWVDYLTAMDELRQNILLQAYAQRDPLVEFKRESFRMFDELKQNIARDIVYNIIPATFQYEAYLRQIAEEQARRLATAQTVSSDGNGEVVRKPQRRSTPQIGRNELCPCGSGKKFKHCHLGREHELASLLNAQPSAPPASKALKSTPATQTAVAEEAAKIQAAINSGKLPPTQTTPRGRQAPSVPRGKKR</sequence>
<proteinExistence type="inferred from homology"/>
<evidence type="ECO:0000255" key="1">
    <source>
        <dbReference type="HAMAP-Rule" id="MF_01382"/>
    </source>
</evidence>
<evidence type="ECO:0000256" key="2">
    <source>
        <dbReference type="SAM" id="MobiDB-lite"/>
    </source>
</evidence>
<name>SECA_CHLAA</name>
<dbReference type="EC" id="7.4.2.8" evidence="1"/>
<dbReference type="EMBL" id="CP000909">
    <property type="protein sequence ID" value="ABY33776.1"/>
    <property type="molecule type" value="Genomic_DNA"/>
</dbReference>
<dbReference type="RefSeq" id="WP_012256432.1">
    <property type="nucleotide sequence ID" value="NC_010175.1"/>
</dbReference>
<dbReference type="RefSeq" id="YP_001634165.1">
    <property type="nucleotide sequence ID" value="NC_010175.1"/>
</dbReference>
<dbReference type="SMR" id="A9WEB6"/>
<dbReference type="FunCoup" id="A9WEB6">
    <property type="interactions" value="466"/>
</dbReference>
<dbReference type="STRING" id="324602.Caur_0529"/>
<dbReference type="EnsemblBacteria" id="ABY33776">
    <property type="protein sequence ID" value="ABY33776"/>
    <property type="gene ID" value="Caur_0529"/>
</dbReference>
<dbReference type="KEGG" id="cau:Caur_0529"/>
<dbReference type="PATRIC" id="fig|324602.8.peg.599"/>
<dbReference type="eggNOG" id="COG0653">
    <property type="taxonomic scope" value="Bacteria"/>
</dbReference>
<dbReference type="HOGENOM" id="CLU_005314_3_0_0"/>
<dbReference type="InParanoid" id="A9WEB6"/>
<dbReference type="Proteomes" id="UP000002008">
    <property type="component" value="Chromosome"/>
</dbReference>
<dbReference type="GO" id="GO:0031522">
    <property type="term" value="C:cell envelope Sec protein transport complex"/>
    <property type="evidence" value="ECO:0000318"/>
    <property type="project" value="GO_Central"/>
</dbReference>
<dbReference type="GO" id="GO:0005737">
    <property type="term" value="C:cytoplasm"/>
    <property type="evidence" value="ECO:0007669"/>
    <property type="project" value="UniProtKB-SubCell"/>
</dbReference>
<dbReference type="GO" id="GO:0005886">
    <property type="term" value="C:plasma membrane"/>
    <property type="evidence" value="ECO:0000318"/>
    <property type="project" value="GO_Central"/>
</dbReference>
<dbReference type="GO" id="GO:0005524">
    <property type="term" value="F:ATP binding"/>
    <property type="evidence" value="ECO:0000318"/>
    <property type="project" value="GO_Central"/>
</dbReference>
<dbReference type="GO" id="GO:0046872">
    <property type="term" value="F:metal ion binding"/>
    <property type="evidence" value="ECO:0007669"/>
    <property type="project" value="UniProtKB-KW"/>
</dbReference>
<dbReference type="GO" id="GO:0008564">
    <property type="term" value="F:protein-exporting ATPase activity"/>
    <property type="evidence" value="ECO:0007669"/>
    <property type="project" value="UniProtKB-EC"/>
</dbReference>
<dbReference type="GO" id="GO:0065002">
    <property type="term" value="P:intracellular protein transmembrane transport"/>
    <property type="evidence" value="ECO:0007669"/>
    <property type="project" value="UniProtKB-UniRule"/>
</dbReference>
<dbReference type="GO" id="GO:0017038">
    <property type="term" value="P:protein import"/>
    <property type="evidence" value="ECO:0007669"/>
    <property type="project" value="InterPro"/>
</dbReference>
<dbReference type="GO" id="GO:0006605">
    <property type="term" value="P:protein targeting"/>
    <property type="evidence" value="ECO:0007669"/>
    <property type="project" value="UniProtKB-UniRule"/>
</dbReference>
<dbReference type="GO" id="GO:0043952">
    <property type="term" value="P:protein transport by the Sec complex"/>
    <property type="evidence" value="ECO:0000318"/>
    <property type="project" value="GO_Central"/>
</dbReference>
<dbReference type="CDD" id="cd17928">
    <property type="entry name" value="DEXDc_SecA"/>
    <property type="match status" value="1"/>
</dbReference>
<dbReference type="CDD" id="cd18803">
    <property type="entry name" value="SF2_C_secA"/>
    <property type="match status" value="1"/>
</dbReference>
<dbReference type="FunFam" id="3.40.50.300:FF:000113">
    <property type="entry name" value="Preprotein translocase subunit SecA"/>
    <property type="match status" value="1"/>
</dbReference>
<dbReference type="FunFam" id="1.10.3060.10:FF:000003">
    <property type="entry name" value="Protein translocase subunit SecA"/>
    <property type="match status" value="1"/>
</dbReference>
<dbReference type="FunFam" id="3.90.1440.10:FF:000002">
    <property type="entry name" value="Protein translocase subunit SecA"/>
    <property type="match status" value="1"/>
</dbReference>
<dbReference type="Gene3D" id="1.10.3060.10">
    <property type="entry name" value="Helical scaffold and wing domains of SecA"/>
    <property type="match status" value="1"/>
</dbReference>
<dbReference type="Gene3D" id="3.40.50.300">
    <property type="entry name" value="P-loop containing nucleotide triphosphate hydrolases"/>
    <property type="match status" value="2"/>
</dbReference>
<dbReference type="Gene3D" id="3.90.1440.10">
    <property type="entry name" value="SecA, preprotein cross-linking domain"/>
    <property type="match status" value="1"/>
</dbReference>
<dbReference type="HAMAP" id="MF_01382">
    <property type="entry name" value="SecA"/>
    <property type="match status" value="1"/>
</dbReference>
<dbReference type="InterPro" id="IPR014001">
    <property type="entry name" value="Helicase_ATP-bd"/>
</dbReference>
<dbReference type="InterPro" id="IPR001650">
    <property type="entry name" value="Helicase_C-like"/>
</dbReference>
<dbReference type="InterPro" id="IPR027417">
    <property type="entry name" value="P-loop_NTPase"/>
</dbReference>
<dbReference type="InterPro" id="IPR004027">
    <property type="entry name" value="SEC_C_motif"/>
</dbReference>
<dbReference type="InterPro" id="IPR000185">
    <property type="entry name" value="SecA"/>
</dbReference>
<dbReference type="InterPro" id="IPR020937">
    <property type="entry name" value="SecA_CS"/>
</dbReference>
<dbReference type="InterPro" id="IPR011115">
    <property type="entry name" value="SecA_DEAD"/>
</dbReference>
<dbReference type="InterPro" id="IPR014018">
    <property type="entry name" value="SecA_motor_DEAD"/>
</dbReference>
<dbReference type="InterPro" id="IPR011130">
    <property type="entry name" value="SecA_preprotein_X-link_dom"/>
</dbReference>
<dbReference type="InterPro" id="IPR044722">
    <property type="entry name" value="SecA_SF2_C"/>
</dbReference>
<dbReference type="InterPro" id="IPR011116">
    <property type="entry name" value="SecA_Wing/Scaffold"/>
</dbReference>
<dbReference type="InterPro" id="IPR036266">
    <property type="entry name" value="SecA_Wing/Scaffold_sf"/>
</dbReference>
<dbReference type="InterPro" id="IPR036670">
    <property type="entry name" value="SecA_X-link_sf"/>
</dbReference>
<dbReference type="NCBIfam" id="NF009538">
    <property type="entry name" value="PRK12904.1"/>
    <property type="match status" value="1"/>
</dbReference>
<dbReference type="NCBIfam" id="TIGR00963">
    <property type="entry name" value="secA"/>
    <property type="match status" value="1"/>
</dbReference>
<dbReference type="PANTHER" id="PTHR30612:SF0">
    <property type="entry name" value="CHLOROPLAST PROTEIN-TRANSPORTING ATPASE"/>
    <property type="match status" value="1"/>
</dbReference>
<dbReference type="PANTHER" id="PTHR30612">
    <property type="entry name" value="SECA INNER MEMBRANE COMPONENT OF SEC PROTEIN SECRETION SYSTEM"/>
    <property type="match status" value="1"/>
</dbReference>
<dbReference type="Pfam" id="PF21090">
    <property type="entry name" value="P-loop_SecA"/>
    <property type="match status" value="1"/>
</dbReference>
<dbReference type="Pfam" id="PF02810">
    <property type="entry name" value="SEC-C"/>
    <property type="match status" value="1"/>
</dbReference>
<dbReference type="Pfam" id="PF07517">
    <property type="entry name" value="SecA_DEAD"/>
    <property type="match status" value="1"/>
</dbReference>
<dbReference type="Pfam" id="PF01043">
    <property type="entry name" value="SecA_PP_bind"/>
    <property type="match status" value="1"/>
</dbReference>
<dbReference type="Pfam" id="PF07516">
    <property type="entry name" value="SecA_SW"/>
    <property type="match status" value="1"/>
</dbReference>
<dbReference type="PRINTS" id="PR00906">
    <property type="entry name" value="SECA"/>
</dbReference>
<dbReference type="SMART" id="SM00957">
    <property type="entry name" value="SecA_DEAD"/>
    <property type="match status" value="1"/>
</dbReference>
<dbReference type="SMART" id="SM00958">
    <property type="entry name" value="SecA_PP_bind"/>
    <property type="match status" value="1"/>
</dbReference>
<dbReference type="SUPFAM" id="SSF81886">
    <property type="entry name" value="Helical scaffold and wing domains of SecA"/>
    <property type="match status" value="1"/>
</dbReference>
<dbReference type="SUPFAM" id="SSF52540">
    <property type="entry name" value="P-loop containing nucleoside triphosphate hydrolases"/>
    <property type="match status" value="2"/>
</dbReference>
<dbReference type="SUPFAM" id="SSF81767">
    <property type="entry name" value="Pre-protein crosslinking domain of SecA"/>
    <property type="match status" value="1"/>
</dbReference>
<dbReference type="PROSITE" id="PS01312">
    <property type="entry name" value="SECA"/>
    <property type="match status" value="1"/>
</dbReference>
<dbReference type="PROSITE" id="PS51196">
    <property type="entry name" value="SECA_MOTOR_DEAD"/>
    <property type="match status" value="1"/>
</dbReference>
<reference key="1">
    <citation type="journal article" date="2011" name="BMC Genomics">
        <title>Complete genome sequence of the filamentous anoxygenic phototrophic bacterium Chloroflexus aurantiacus.</title>
        <authorList>
            <person name="Tang K.H."/>
            <person name="Barry K."/>
            <person name="Chertkov O."/>
            <person name="Dalin E."/>
            <person name="Han C.S."/>
            <person name="Hauser L.J."/>
            <person name="Honchak B.M."/>
            <person name="Karbach L.E."/>
            <person name="Land M.L."/>
            <person name="Lapidus A."/>
            <person name="Larimer F.W."/>
            <person name="Mikhailova N."/>
            <person name="Pitluck S."/>
            <person name="Pierson B.K."/>
            <person name="Blankenship R.E."/>
        </authorList>
    </citation>
    <scope>NUCLEOTIDE SEQUENCE [LARGE SCALE GENOMIC DNA]</scope>
    <source>
        <strain>ATCC 29366 / DSM 635 / J-10-fl</strain>
    </source>
</reference>
<accession>A9WEB6</accession>
<gene>
    <name evidence="1" type="primary">secA</name>
    <name type="ordered locus">Caur_0529</name>
</gene>
<comment type="function">
    <text evidence="1">Part of the Sec protein translocase complex. Interacts with the SecYEG preprotein conducting channel. Has a central role in coupling the hydrolysis of ATP to the transfer of proteins into and across the cell membrane, serving as an ATP-driven molecular motor driving the stepwise translocation of polypeptide chains across the membrane.</text>
</comment>
<comment type="catalytic activity">
    <reaction evidence="1">
        <text>ATP + H2O + cellular proteinSide 1 = ADP + phosphate + cellular proteinSide 2.</text>
        <dbReference type="EC" id="7.4.2.8"/>
    </reaction>
</comment>
<comment type="cofactor">
    <cofactor evidence="1">
        <name>Zn(2+)</name>
        <dbReference type="ChEBI" id="CHEBI:29105"/>
    </cofactor>
    <text evidence="1">May bind 1 zinc ion per subunit.</text>
</comment>
<comment type="subunit">
    <text evidence="1">Monomer and homodimer. Part of the essential Sec protein translocation apparatus which comprises SecA, SecYEG and auxiliary proteins SecDF. Other proteins may also be involved.</text>
</comment>
<comment type="subcellular location">
    <subcellularLocation>
        <location evidence="1">Cell membrane</location>
        <topology evidence="1">Peripheral membrane protein</topology>
        <orientation evidence="1">Cytoplasmic side</orientation>
    </subcellularLocation>
    <subcellularLocation>
        <location evidence="1">Cytoplasm</location>
    </subcellularLocation>
    <text evidence="1">Distribution is 50-50.</text>
</comment>
<comment type="similarity">
    <text evidence="1">Belongs to the SecA family.</text>
</comment>
<keyword id="KW-0067">ATP-binding</keyword>
<keyword id="KW-1003">Cell membrane</keyword>
<keyword id="KW-0963">Cytoplasm</keyword>
<keyword id="KW-0472">Membrane</keyword>
<keyword id="KW-0479">Metal-binding</keyword>
<keyword id="KW-0547">Nucleotide-binding</keyword>
<keyword id="KW-0653">Protein transport</keyword>
<keyword id="KW-1185">Reference proteome</keyword>
<keyword id="KW-1278">Translocase</keyword>
<keyword id="KW-0811">Translocation</keyword>
<keyword id="KW-0813">Transport</keyword>
<keyword id="KW-0862">Zinc</keyword>
<organism>
    <name type="scientific">Chloroflexus aurantiacus (strain ATCC 29366 / DSM 635 / J-10-fl)</name>
    <dbReference type="NCBI Taxonomy" id="324602"/>
    <lineage>
        <taxon>Bacteria</taxon>
        <taxon>Bacillati</taxon>
        <taxon>Chloroflexota</taxon>
        <taxon>Chloroflexia</taxon>
        <taxon>Chloroflexales</taxon>
        <taxon>Chloroflexineae</taxon>
        <taxon>Chloroflexaceae</taxon>
        <taxon>Chloroflexus</taxon>
    </lineage>
</organism>